<protein>
    <recommendedName>
        <fullName evidence="1">Succinate--CoA ligase [ADP-forming] subunit beta, mitochondrial</fullName>
        <ecNumber evidence="1">6.2.1.5</ecNumber>
    </recommendedName>
    <alternativeName>
        <fullName evidence="1">ATP-specific succinyl-CoA synthetase subunit beta</fullName>
        <shortName evidence="1">A-SCS</shortName>
    </alternativeName>
    <alternativeName>
        <fullName evidence="1">Succinyl-CoA synthetase beta-A chain</fullName>
        <shortName evidence="1">SCS-betaA</shortName>
    </alternativeName>
</protein>
<reference key="1">
    <citation type="journal article" date="2002" name="Nature">
        <title>Sequence and analysis of chromosome 2 of Dictyostelium discoideum.</title>
        <authorList>
            <person name="Gloeckner G."/>
            <person name="Eichinger L."/>
            <person name="Szafranski K."/>
            <person name="Pachebat J.A."/>
            <person name="Bankier A.T."/>
            <person name="Dear P.H."/>
            <person name="Lehmann R."/>
            <person name="Baumgart C."/>
            <person name="Parra G."/>
            <person name="Abril J.F."/>
            <person name="Guigo R."/>
            <person name="Kumpf K."/>
            <person name="Tunggal B."/>
            <person name="Cox E.C."/>
            <person name="Quail M.A."/>
            <person name="Platzer M."/>
            <person name="Rosenthal A."/>
            <person name="Noegel A.A."/>
        </authorList>
    </citation>
    <scope>NUCLEOTIDE SEQUENCE [LARGE SCALE GENOMIC DNA]</scope>
    <source>
        <strain>AX4</strain>
    </source>
</reference>
<reference key="2">
    <citation type="journal article" date="2005" name="Nature">
        <title>The genome of the social amoeba Dictyostelium discoideum.</title>
        <authorList>
            <person name="Eichinger L."/>
            <person name="Pachebat J.A."/>
            <person name="Gloeckner G."/>
            <person name="Rajandream M.A."/>
            <person name="Sucgang R."/>
            <person name="Berriman M."/>
            <person name="Song J."/>
            <person name="Olsen R."/>
            <person name="Szafranski K."/>
            <person name="Xu Q."/>
            <person name="Tunggal B."/>
            <person name="Kummerfeld S."/>
            <person name="Madera M."/>
            <person name="Konfortov B.A."/>
            <person name="Rivero F."/>
            <person name="Bankier A.T."/>
            <person name="Lehmann R."/>
            <person name="Hamlin N."/>
            <person name="Davies R."/>
            <person name="Gaudet P."/>
            <person name="Fey P."/>
            <person name="Pilcher K."/>
            <person name="Chen G."/>
            <person name="Saunders D."/>
            <person name="Sodergren E.J."/>
            <person name="Davis P."/>
            <person name="Kerhornou A."/>
            <person name="Nie X."/>
            <person name="Hall N."/>
            <person name="Anjard C."/>
            <person name="Hemphill L."/>
            <person name="Bason N."/>
            <person name="Farbrother P."/>
            <person name="Desany B."/>
            <person name="Just E."/>
            <person name="Morio T."/>
            <person name="Rost R."/>
            <person name="Churcher C.M."/>
            <person name="Cooper J."/>
            <person name="Haydock S."/>
            <person name="van Driessche N."/>
            <person name="Cronin A."/>
            <person name="Goodhead I."/>
            <person name="Muzny D.M."/>
            <person name="Mourier T."/>
            <person name="Pain A."/>
            <person name="Lu M."/>
            <person name="Harper D."/>
            <person name="Lindsay R."/>
            <person name="Hauser H."/>
            <person name="James K.D."/>
            <person name="Quiles M."/>
            <person name="Madan Babu M."/>
            <person name="Saito T."/>
            <person name="Buchrieser C."/>
            <person name="Wardroper A."/>
            <person name="Felder M."/>
            <person name="Thangavelu M."/>
            <person name="Johnson D."/>
            <person name="Knights A."/>
            <person name="Loulseged H."/>
            <person name="Mungall K.L."/>
            <person name="Oliver K."/>
            <person name="Price C."/>
            <person name="Quail M.A."/>
            <person name="Urushihara H."/>
            <person name="Hernandez J."/>
            <person name="Rabbinowitsch E."/>
            <person name="Steffen D."/>
            <person name="Sanders M."/>
            <person name="Ma J."/>
            <person name="Kohara Y."/>
            <person name="Sharp S."/>
            <person name="Simmonds M.N."/>
            <person name="Spiegler S."/>
            <person name="Tivey A."/>
            <person name="Sugano S."/>
            <person name="White B."/>
            <person name="Walker D."/>
            <person name="Woodward J.R."/>
            <person name="Winckler T."/>
            <person name="Tanaka Y."/>
            <person name="Shaulsky G."/>
            <person name="Schleicher M."/>
            <person name="Weinstock G.M."/>
            <person name="Rosenthal A."/>
            <person name="Cox E.C."/>
            <person name="Chisholm R.L."/>
            <person name="Gibbs R.A."/>
            <person name="Loomis W.F."/>
            <person name="Platzer M."/>
            <person name="Kay R.R."/>
            <person name="Williams J.G."/>
            <person name="Dear P.H."/>
            <person name="Noegel A.A."/>
            <person name="Barrell B.G."/>
            <person name="Kuspa A."/>
        </authorList>
    </citation>
    <scope>NUCLEOTIDE SEQUENCE [LARGE SCALE GENOMIC DNA]</scope>
    <source>
        <strain>AX4</strain>
    </source>
</reference>
<proteinExistence type="inferred from homology"/>
<name>SUCB1_DICDI</name>
<keyword id="KW-0067">ATP-binding</keyword>
<keyword id="KW-0436">Ligase</keyword>
<keyword id="KW-0460">Magnesium</keyword>
<keyword id="KW-0479">Metal-binding</keyword>
<keyword id="KW-0496">Mitochondrion</keyword>
<keyword id="KW-0547">Nucleotide-binding</keyword>
<keyword id="KW-1185">Reference proteome</keyword>
<keyword id="KW-0809">Transit peptide</keyword>
<keyword id="KW-0816">Tricarboxylic acid cycle</keyword>
<accession>Q55AI5</accession>
<accession>Q86AG1</accession>
<dbReference type="EC" id="6.2.1.5" evidence="1"/>
<dbReference type="EMBL" id="AAFI02000006">
    <property type="protein sequence ID" value="EAL71611.1"/>
    <property type="molecule type" value="Genomic_DNA"/>
</dbReference>
<dbReference type="RefSeq" id="XP_645537.1">
    <property type="nucleotide sequence ID" value="XM_640445.1"/>
</dbReference>
<dbReference type="SMR" id="Q55AI5"/>
<dbReference type="FunCoup" id="Q55AI5">
    <property type="interactions" value="746"/>
</dbReference>
<dbReference type="STRING" id="44689.Q55AI5"/>
<dbReference type="PaxDb" id="44689-DDB0231357"/>
<dbReference type="EnsemblProtists" id="EAL71611">
    <property type="protein sequence ID" value="EAL71611"/>
    <property type="gene ID" value="DDB_G0271842"/>
</dbReference>
<dbReference type="GeneID" id="8618166"/>
<dbReference type="KEGG" id="ddi:DDB_G0271842"/>
<dbReference type="dictyBase" id="DDB_G0271842">
    <property type="gene designation" value="scsC"/>
</dbReference>
<dbReference type="VEuPathDB" id="AmoebaDB:DDB_G0271842"/>
<dbReference type="eggNOG" id="KOG2799">
    <property type="taxonomic scope" value="Eukaryota"/>
</dbReference>
<dbReference type="HOGENOM" id="CLU_037430_0_0_1"/>
<dbReference type="InParanoid" id="Q55AI5"/>
<dbReference type="OMA" id="ITACDEV"/>
<dbReference type="PhylomeDB" id="Q55AI5"/>
<dbReference type="Reactome" id="R-DDI-71403">
    <property type="pathway name" value="Citric acid cycle (TCA cycle)"/>
</dbReference>
<dbReference type="UniPathway" id="UPA00223">
    <property type="reaction ID" value="UER00999"/>
</dbReference>
<dbReference type="PRO" id="PR:Q55AI5"/>
<dbReference type="Proteomes" id="UP000002195">
    <property type="component" value="Chromosome 2"/>
</dbReference>
<dbReference type="GO" id="GO:0005739">
    <property type="term" value="C:mitochondrion"/>
    <property type="evidence" value="ECO:0000250"/>
    <property type="project" value="dictyBase"/>
</dbReference>
<dbReference type="GO" id="GO:0042709">
    <property type="term" value="C:succinate-CoA ligase complex"/>
    <property type="evidence" value="ECO:0000318"/>
    <property type="project" value="GO_Central"/>
</dbReference>
<dbReference type="GO" id="GO:0005524">
    <property type="term" value="F:ATP binding"/>
    <property type="evidence" value="ECO:0007669"/>
    <property type="project" value="UniProtKB-UniRule"/>
</dbReference>
<dbReference type="GO" id="GO:0000287">
    <property type="term" value="F:magnesium ion binding"/>
    <property type="evidence" value="ECO:0007669"/>
    <property type="project" value="UniProtKB-UniRule"/>
</dbReference>
<dbReference type="GO" id="GO:0004775">
    <property type="term" value="F:succinate-CoA ligase (ADP-forming) activity"/>
    <property type="evidence" value="ECO:0000318"/>
    <property type="project" value="GO_Central"/>
</dbReference>
<dbReference type="GO" id="GO:0006104">
    <property type="term" value="P:succinyl-CoA metabolic process"/>
    <property type="evidence" value="ECO:0000318"/>
    <property type="project" value="GO_Central"/>
</dbReference>
<dbReference type="GO" id="GO:0006099">
    <property type="term" value="P:tricarboxylic acid cycle"/>
    <property type="evidence" value="ECO:0000318"/>
    <property type="project" value="GO_Central"/>
</dbReference>
<dbReference type="FunFam" id="3.30.470.20:FF:000002">
    <property type="entry name" value="Succinate--CoA ligase [ADP-forming] subunit beta"/>
    <property type="match status" value="1"/>
</dbReference>
<dbReference type="FunFam" id="3.40.50.261:FF:000001">
    <property type="entry name" value="Succinate--CoA ligase [ADP-forming] subunit beta"/>
    <property type="match status" value="1"/>
</dbReference>
<dbReference type="FunFam" id="3.30.1490.20:FF:000004">
    <property type="entry name" value="Succinate--CoA ligase [ADP-forming] subunit beta, mitochondrial"/>
    <property type="match status" value="1"/>
</dbReference>
<dbReference type="Gene3D" id="3.30.1490.20">
    <property type="entry name" value="ATP-grasp fold, A domain"/>
    <property type="match status" value="1"/>
</dbReference>
<dbReference type="Gene3D" id="3.30.470.20">
    <property type="entry name" value="ATP-grasp fold, B domain"/>
    <property type="match status" value="1"/>
</dbReference>
<dbReference type="Gene3D" id="3.40.50.261">
    <property type="entry name" value="Succinyl-CoA synthetase domains"/>
    <property type="match status" value="1"/>
</dbReference>
<dbReference type="HAMAP" id="MF_00558">
    <property type="entry name" value="Succ_CoA_beta"/>
    <property type="match status" value="1"/>
</dbReference>
<dbReference type="HAMAP" id="MF_03220">
    <property type="entry name" value="Succ_CoA_betaA_euk"/>
    <property type="match status" value="1"/>
</dbReference>
<dbReference type="InterPro" id="IPR011761">
    <property type="entry name" value="ATP-grasp"/>
</dbReference>
<dbReference type="InterPro" id="IPR013650">
    <property type="entry name" value="ATP-grasp_succ-CoA_synth-type"/>
</dbReference>
<dbReference type="InterPro" id="IPR013815">
    <property type="entry name" value="ATP_grasp_subdomain_1"/>
</dbReference>
<dbReference type="InterPro" id="IPR017866">
    <property type="entry name" value="Succ-CoA_synthase_bsu_CS"/>
</dbReference>
<dbReference type="InterPro" id="IPR005811">
    <property type="entry name" value="SUCC_ACL_C"/>
</dbReference>
<dbReference type="InterPro" id="IPR034723">
    <property type="entry name" value="Succ_CoA_betaA_euk"/>
</dbReference>
<dbReference type="InterPro" id="IPR005809">
    <property type="entry name" value="Succ_CoA_ligase-like_bsu"/>
</dbReference>
<dbReference type="InterPro" id="IPR016102">
    <property type="entry name" value="Succinyl-CoA_synth-like"/>
</dbReference>
<dbReference type="NCBIfam" id="NF001913">
    <property type="entry name" value="PRK00696.1"/>
    <property type="match status" value="1"/>
</dbReference>
<dbReference type="NCBIfam" id="TIGR01016">
    <property type="entry name" value="sucCoAbeta"/>
    <property type="match status" value="1"/>
</dbReference>
<dbReference type="PANTHER" id="PTHR11815:SF1">
    <property type="entry name" value="SUCCINATE--COA LIGASE [ADP-FORMING] SUBUNIT BETA, MITOCHONDRIAL"/>
    <property type="match status" value="1"/>
</dbReference>
<dbReference type="PANTHER" id="PTHR11815">
    <property type="entry name" value="SUCCINYL-COA SYNTHETASE BETA CHAIN"/>
    <property type="match status" value="1"/>
</dbReference>
<dbReference type="Pfam" id="PF08442">
    <property type="entry name" value="ATP-grasp_2"/>
    <property type="match status" value="1"/>
</dbReference>
<dbReference type="Pfam" id="PF00549">
    <property type="entry name" value="Ligase_CoA"/>
    <property type="match status" value="1"/>
</dbReference>
<dbReference type="PIRSF" id="PIRSF001554">
    <property type="entry name" value="SucCS_beta"/>
    <property type="match status" value="1"/>
</dbReference>
<dbReference type="SUPFAM" id="SSF56059">
    <property type="entry name" value="Glutathione synthetase ATP-binding domain-like"/>
    <property type="match status" value="1"/>
</dbReference>
<dbReference type="SUPFAM" id="SSF52210">
    <property type="entry name" value="Succinyl-CoA synthetase domains"/>
    <property type="match status" value="1"/>
</dbReference>
<dbReference type="PROSITE" id="PS50975">
    <property type="entry name" value="ATP_GRASP"/>
    <property type="match status" value="1"/>
</dbReference>
<dbReference type="PROSITE" id="PS01217">
    <property type="entry name" value="SUCCINYL_COA_LIG_3"/>
    <property type="match status" value="1"/>
</dbReference>
<organism>
    <name type="scientific">Dictyostelium discoideum</name>
    <name type="common">Social amoeba</name>
    <dbReference type="NCBI Taxonomy" id="44689"/>
    <lineage>
        <taxon>Eukaryota</taxon>
        <taxon>Amoebozoa</taxon>
        <taxon>Evosea</taxon>
        <taxon>Eumycetozoa</taxon>
        <taxon>Dictyostelia</taxon>
        <taxon>Dictyosteliales</taxon>
        <taxon>Dictyosteliaceae</taxon>
        <taxon>Dictyostelium</taxon>
    </lineage>
</organism>
<sequence length="445" mass="48350">MLSNIVKKTIQSSKNLKSLVLNKSTSSLVYQKRFLNVHEYQAQKMMKSYGINCPVGNVAETPEEAEKIAEVMNTQDLVVKAQVLAGGRGKGIFTSGLKGGVQLCSSAEDVKKFASKMLGHTLVTKQTGEDGKVVHQVYVTERHFLRKEMYFAILMDRKAGGPVMVASPEGGVDIEGVARDNPSAIFKEPIDIMIGVQPEQTKRLAEKLGFSKKNISMAQDQMKKLYDFFIKNDCTLVEINPLAETASGDVLCMDAKLNFDDNAAFRHPDIFKLRDKSQEDPREVKAAEFDLNYIGLDGNIGCLVNGAGLAMASMDIIKLYGGSPANFLDVGGGATQKQVTEAIKLISSDKKVKSILVNIFGGIMKCDVIALGIIAALKELSIATPLVVRLQGTNVEAAKKIMEDSGLRLIAADNLDDAAQKSVRIAEIVSLAEKSDLEISFKLPL</sequence>
<comment type="function">
    <text evidence="1">ATP-specific succinyl-CoA synthetase functions in the citric acid cycle (TCA), coupling the hydrolysis of succinyl-CoA to the synthesis of ATP and thus represents the only step of substrate-level phosphorylation in the TCA. The beta subunit provides nucleotide specificity of the enzyme and binds the substrate succinate, while the binding sites for coenzyme A and phosphate are found in the alpha subunit.</text>
</comment>
<comment type="catalytic activity">
    <reaction evidence="1">
        <text>succinate + ATP + CoA = succinyl-CoA + ADP + phosphate</text>
        <dbReference type="Rhea" id="RHEA:17661"/>
        <dbReference type="ChEBI" id="CHEBI:30031"/>
        <dbReference type="ChEBI" id="CHEBI:30616"/>
        <dbReference type="ChEBI" id="CHEBI:43474"/>
        <dbReference type="ChEBI" id="CHEBI:57287"/>
        <dbReference type="ChEBI" id="CHEBI:57292"/>
        <dbReference type="ChEBI" id="CHEBI:456216"/>
        <dbReference type="EC" id="6.2.1.5"/>
    </reaction>
</comment>
<comment type="cofactor">
    <cofactor evidence="1">
        <name>Mg(2+)</name>
        <dbReference type="ChEBI" id="CHEBI:18420"/>
    </cofactor>
    <text evidence="1">Binds 1 Mg(2+) ion per subunit.</text>
</comment>
<comment type="pathway">
    <text evidence="1">Carbohydrate metabolism; tricarboxylic acid cycle; succinate from succinyl-CoA (ligase route): step 1/1.</text>
</comment>
<comment type="subunit">
    <text evidence="1">Heterodimer of an alpha and a beta subunit. The beta subunit determines specificity for ATP.</text>
</comment>
<comment type="subcellular location">
    <subcellularLocation>
        <location evidence="1">Mitochondrion</location>
    </subcellularLocation>
</comment>
<comment type="similarity">
    <text evidence="1">Belongs to the succinate/malate CoA ligase beta subunit family. ATP-specific subunit beta subfamily.</text>
</comment>
<feature type="transit peptide" description="Mitochondrion" evidence="1">
    <location>
        <begin position="1"/>
        <end position="17"/>
    </location>
</feature>
<feature type="chain" id="PRO_0000328365" description="Succinate--CoA ligase [ADP-forming] subunit beta, mitochondrial" evidence="1">
    <location>
        <begin position="18"/>
        <end position="445"/>
    </location>
</feature>
<feature type="domain" description="ATP-grasp" evidence="1">
    <location>
        <begin position="43"/>
        <end position="270"/>
    </location>
</feature>
<feature type="binding site" evidence="1">
    <location>
        <position position="80"/>
    </location>
    <ligand>
        <name>ATP</name>
        <dbReference type="ChEBI" id="CHEBI:30616"/>
    </ligand>
</feature>
<feature type="binding site" evidence="1">
    <location>
        <begin position="87"/>
        <end position="89"/>
    </location>
    <ligand>
        <name>ATP</name>
        <dbReference type="ChEBI" id="CHEBI:30616"/>
    </ligand>
</feature>
<feature type="binding site" evidence="1">
    <location>
        <position position="240"/>
    </location>
    <ligand>
        <name>Mg(2+)</name>
        <dbReference type="ChEBI" id="CHEBI:18420"/>
    </ligand>
</feature>
<feature type="binding site" evidence="1">
    <location>
        <position position="254"/>
    </location>
    <ligand>
        <name>Mg(2+)</name>
        <dbReference type="ChEBI" id="CHEBI:18420"/>
    </ligand>
</feature>
<feature type="binding site" evidence="1">
    <location>
        <position position="305"/>
    </location>
    <ligand>
        <name>substrate</name>
        <note>ligand shared with subunit alpha</note>
    </ligand>
</feature>
<feature type="binding site" evidence="1">
    <location>
        <begin position="362"/>
        <end position="364"/>
    </location>
    <ligand>
        <name>substrate</name>
        <note>ligand shared with subunit alpha</note>
    </ligand>
</feature>
<feature type="site" description="Important for substrate specificity" evidence="1">
    <location>
        <position position="76"/>
    </location>
</feature>
<feature type="site" description="Important for substrate specificity" evidence="1">
    <location>
        <position position="144"/>
    </location>
</feature>
<evidence type="ECO:0000255" key="1">
    <source>
        <dbReference type="HAMAP-Rule" id="MF_03220"/>
    </source>
</evidence>
<gene>
    <name type="primary">scsC</name>
    <name type="synonym">sucla2</name>
    <name type="ORF">DDB_G0271842</name>
</gene>